<protein>
    <recommendedName>
        <fullName evidence="1">Homoserine kinase</fullName>
        <shortName evidence="1">HK</shortName>
        <shortName evidence="1">HSK</shortName>
        <ecNumber evidence="1">2.7.1.39</ecNumber>
    </recommendedName>
</protein>
<comment type="function">
    <text evidence="1">Catalyzes the ATP-dependent phosphorylation of L-homoserine to L-homoserine phosphate.</text>
</comment>
<comment type="catalytic activity">
    <reaction evidence="1">
        <text>L-homoserine + ATP = O-phospho-L-homoserine + ADP + H(+)</text>
        <dbReference type="Rhea" id="RHEA:13985"/>
        <dbReference type="ChEBI" id="CHEBI:15378"/>
        <dbReference type="ChEBI" id="CHEBI:30616"/>
        <dbReference type="ChEBI" id="CHEBI:57476"/>
        <dbReference type="ChEBI" id="CHEBI:57590"/>
        <dbReference type="ChEBI" id="CHEBI:456216"/>
        <dbReference type="EC" id="2.7.1.39"/>
    </reaction>
</comment>
<comment type="pathway">
    <text evidence="1">Amino-acid biosynthesis; L-threonine biosynthesis; L-threonine from L-aspartate: step 4/5.</text>
</comment>
<comment type="subcellular location">
    <subcellularLocation>
        <location evidence="1">Cytoplasm</location>
    </subcellularLocation>
</comment>
<comment type="similarity">
    <text evidence="1">Belongs to the GHMP kinase family. Homoserine kinase subfamily.</text>
</comment>
<reference key="1">
    <citation type="journal article" date="2003" name="Nature">
        <title>Genome sequence of Bacillus cereus and comparative analysis with Bacillus anthracis.</title>
        <authorList>
            <person name="Ivanova N."/>
            <person name="Sorokin A."/>
            <person name="Anderson I."/>
            <person name="Galleron N."/>
            <person name="Candelon B."/>
            <person name="Kapatral V."/>
            <person name="Bhattacharyya A."/>
            <person name="Reznik G."/>
            <person name="Mikhailova N."/>
            <person name="Lapidus A."/>
            <person name="Chu L."/>
            <person name="Mazur M."/>
            <person name="Goltsman E."/>
            <person name="Larsen N."/>
            <person name="D'Souza M."/>
            <person name="Walunas T."/>
            <person name="Grechkin Y."/>
            <person name="Pusch G."/>
            <person name="Haselkorn R."/>
            <person name="Fonstein M."/>
            <person name="Ehrlich S.D."/>
            <person name="Overbeek R."/>
            <person name="Kyrpides N.C."/>
        </authorList>
    </citation>
    <scope>NUCLEOTIDE SEQUENCE [LARGE SCALE GENOMIC DNA]</scope>
    <source>
        <strain>ATCC 14579 / DSM 31 / CCUG 7414 / JCM 2152 / NBRC 15305 / NCIMB 9373 / NCTC 2599 / NRRL B-3711</strain>
    </source>
</reference>
<gene>
    <name evidence="1" type="primary">thrB</name>
    <name type="ordered locus">BC_1966</name>
</gene>
<name>KHSE_BACCR</name>
<evidence type="ECO:0000255" key="1">
    <source>
        <dbReference type="HAMAP-Rule" id="MF_00384"/>
    </source>
</evidence>
<organism>
    <name type="scientific">Bacillus cereus (strain ATCC 14579 / DSM 31 / CCUG 7414 / JCM 2152 / NBRC 15305 / NCIMB 9373 / NCTC 2599 / NRRL B-3711)</name>
    <dbReference type="NCBI Taxonomy" id="226900"/>
    <lineage>
        <taxon>Bacteria</taxon>
        <taxon>Bacillati</taxon>
        <taxon>Bacillota</taxon>
        <taxon>Bacilli</taxon>
        <taxon>Bacillales</taxon>
        <taxon>Bacillaceae</taxon>
        <taxon>Bacillus</taxon>
        <taxon>Bacillus cereus group</taxon>
    </lineage>
</organism>
<dbReference type="EC" id="2.7.1.39" evidence="1"/>
<dbReference type="EMBL" id="AE016877">
    <property type="protein sequence ID" value="AAP08937.1"/>
    <property type="molecule type" value="Genomic_DNA"/>
</dbReference>
<dbReference type="RefSeq" id="NP_831736.1">
    <property type="nucleotide sequence ID" value="NC_004722.1"/>
</dbReference>
<dbReference type="RefSeq" id="WP_000612682.1">
    <property type="nucleotide sequence ID" value="NZ_CP138336.1"/>
</dbReference>
<dbReference type="SMR" id="Q81EK4"/>
<dbReference type="STRING" id="226900.BC_1966"/>
<dbReference type="GeneID" id="67466385"/>
<dbReference type="KEGG" id="bce:BC1966"/>
<dbReference type="PATRIC" id="fig|226900.8.peg.1972"/>
<dbReference type="HOGENOM" id="CLU_041243_0_0_9"/>
<dbReference type="OrthoDB" id="9769912at2"/>
<dbReference type="UniPathway" id="UPA00050">
    <property type="reaction ID" value="UER00064"/>
</dbReference>
<dbReference type="Proteomes" id="UP000001417">
    <property type="component" value="Chromosome"/>
</dbReference>
<dbReference type="GO" id="GO:0005737">
    <property type="term" value="C:cytoplasm"/>
    <property type="evidence" value="ECO:0007669"/>
    <property type="project" value="UniProtKB-SubCell"/>
</dbReference>
<dbReference type="GO" id="GO:0005524">
    <property type="term" value="F:ATP binding"/>
    <property type="evidence" value="ECO:0007669"/>
    <property type="project" value="UniProtKB-UniRule"/>
</dbReference>
<dbReference type="GO" id="GO:0004413">
    <property type="term" value="F:homoserine kinase activity"/>
    <property type="evidence" value="ECO:0007669"/>
    <property type="project" value="UniProtKB-UniRule"/>
</dbReference>
<dbReference type="GO" id="GO:0009088">
    <property type="term" value="P:threonine biosynthetic process"/>
    <property type="evidence" value="ECO:0007669"/>
    <property type="project" value="UniProtKB-UniRule"/>
</dbReference>
<dbReference type="Gene3D" id="3.30.230.10">
    <property type="match status" value="1"/>
</dbReference>
<dbReference type="Gene3D" id="3.30.70.890">
    <property type="entry name" value="GHMP kinase, C-terminal domain"/>
    <property type="match status" value="1"/>
</dbReference>
<dbReference type="HAMAP" id="MF_00384">
    <property type="entry name" value="Homoser_kinase"/>
    <property type="match status" value="1"/>
</dbReference>
<dbReference type="InterPro" id="IPR013750">
    <property type="entry name" value="GHMP_kinase_C_dom"/>
</dbReference>
<dbReference type="InterPro" id="IPR036554">
    <property type="entry name" value="GHMP_kinase_C_sf"/>
</dbReference>
<dbReference type="InterPro" id="IPR006204">
    <property type="entry name" value="GHMP_kinase_N_dom"/>
</dbReference>
<dbReference type="InterPro" id="IPR006203">
    <property type="entry name" value="GHMP_knse_ATP-bd_CS"/>
</dbReference>
<dbReference type="InterPro" id="IPR000870">
    <property type="entry name" value="Homoserine_kinase"/>
</dbReference>
<dbReference type="InterPro" id="IPR020568">
    <property type="entry name" value="Ribosomal_Su5_D2-typ_SF"/>
</dbReference>
<dbReference type="InterPro" id="IPR014721">
    <property type="entry name" value="Ribsml_uS5_D2-typ_fold_subgr"/>
</dbReference>
<dbReference type="NCBIfam" id="TIGR00191">
    <property type="entry name" value="thrB"/>
    <property type="match status" value="1"/>
</dbReference>
<dbReference type="PANTHER" id="PTHR20861:SF1">
    <property type="entry name" value="HOMOSERINE KINASE"/>
    <property type="match status" value="1"/>
</dbReference>
<dbReference type="PANTHER" id="PTHR20861">
    <property type="entry name" value="HOMOSERINE/4-DIPHOSPHOCYTIDYL-2-C-METHYL-D-ERYTHRITOL KINASE"/>
    <property type="match status" value="1"/>
</dbReference>
<dbReference type="Pfam" id="PF08544">
    <property type="entry name" value="GHMP_kinases_C"/>
    <property type="match status" value="1"/>
</dbReference>
<dbReference type="Pfam" id="PF00288">
    <property type="entry name" value="GHMP_kinases_N"/>
    <property type="match status" value="1"/>
</dbReference>
<dbReference type="PIRSF" id="PIRSF000676">
    <property type="entry name" value="Homoser_kin"/>
    <property type="match status" value="1"/>
</dbReference>
<dbReference type="PRINTS" id="PR00958">
    <property type="entry name" value="HOMSERKINASE"/>
</dbReference>
<dbReference type="SUPFAM" id="SSF55060">
    <property type="entry name" value="GHMP Kinase, C-terminal domain"/>
    <property type="match status" value="1"/>
</dbReference>
<dbReference type="SUPFAM" id="SSF54211">
    <property type="entry name" value="Ribosomal protein S5 domain 2-like"/>
    <property type="match status" value="1"/>
</dbReference>
<dbReference type="PROSITE" id="PS00627">
    <property type="entry name" value="GHMP_KINASES_ATP"/>
    <property type="match status" value="1"/>
</dbReference>
<proteinExistence type="inferred from homology"/>
<accession>Q81EK4</accession>
<keyword id="KW-0028">Amino-acid biosynthesis</keyword>
<keyword id="KW-0067">ATP-binding</keyword>
<keyword id="KW-0963">Cytoplasm</keyword>
<keyword id="KW-0418">Kinase</keyword>
<keyword id="KW-0547">Nucleotide-binding</keyword>
<keyword id="KW-1185">Reference proteome</keyword>
<keyword id="KW-0791">Threonine biosynthesis</keyword>
<keyword id="KW-0808">Transferase</keyword>
<feature type="chain" id="PRO_0000156549" description="Homoserine kinase">
    <location>
        <begin position="1"/>
        <end position="297"/>
    </location>
</feature>
<feature type="binding site" evidence="1">
    <location>
        <begin position="82"/>
        <end position="92"/>
    </location>
    <ligand>
        <name>ATP</name>
        <dbReference type="ChEBI" id="CHEBI:30616"/>
    </ligand>
</feature>
<sequence length="297" mass="32116">MIPLSVRVPASTANVGPGFDSVGIALSLYLDVVVKEKADKWQVIHSFEESIPTDDKNLIVSTACKVCPSISPHIIEVTSNIPLTRGLGSSASAIVAGIELANQLGNLNLTADQKVQIATNFEGHPDNVAASILGGTVIGALDGKDISVVRIESKELGVISLIPNEELNTDESRSVLPKMFPFHEAVKASAISNVLVAALCQKRWEVVGEMMERDHFHEPYRLELVPLLPSIRKCAKEFGAYGTALSGAGPSIFILTPYEKRQEIAEQLARVFTDMKVCELEIDHKGIIVNKEEHIGS</sequence>